<accession>Q9P6J7</accession>
<organism>
    <name type="scientific">Schizosaccharomyces pombe (strain 972 / ATCC 24843)</name>
    <name type="common">Fission yeast</name>
    <dbReference type="NCBI Taxonomy" id="284812"/>
    <lineage>
        <taxon>Eukaryota</taxon>
        <taxon>Fungi</taxon>
        <taxon>Dikarya</taxon>
        <taxon>Ascomycota</taxon>
        <taxon>Taphrinomycotina</taxon>
        <taxon>Schizosaccharomycetes</taxon>
        <taxon>Schizosaccharomycetales</taxon>
        <taxon>Schizosaccharomycetaceae</taxon>
        <taxon>Schizosaccharomyces</taxon>
    </lineage>
</organism>
<keyword id="KW-0256">Endoplasmic reticulum</keyword>
<keyword id="KW-0472">Membrane</keyword>
<keyword id="KW-1185">Reference proteome</keyword>
<keyword id="KW-0812">Transmembrane</keyword>
<keyword id="KW-1133">Transmembrane helix</keyword>
<keyword id="KW-0813">Transport</keyword>
<evidence type="ECO:0000255" key="1"/>
<evidence type="ECO:0000269" key="2">
    <source>
    </source>
</evidence>
<evidence type="ECO:0000305" key="3"/>
<evidence type="ECO:0000312" key="4">
    <source>
        <dbReference type="EMBL" id="CAB91165.1"/>
    </source>
</evidence>
<protein>
    <recommendedName>
        <fullName>Uncharacterized MFS-type transporter C1683.03c</fullName>
    </recommendedName>
</protein>
<dbReference type="EMBL" id="CU329671">
    <property type="protein sequence ID" value="CAB91165.1"/>
    <property type="molecule type" value="Genomic_DNA"/>
</dbReference>
<dbReference type="SMR" id="Q9P6J7"/>
<dbReference type="BioGRID" id="276699">
    <property type="interactions" value="21"/>
</dbReference>
<dbReference type="FunCoup" id="Q9P6J7">
    <property type="interactions" value="28"/>
</dbReference>
<dbReference type="iPTMnet" id="Q9P6J7"/>
<dbReference type="PaxDb" id="4896-SPBC1683.03c.1"/>
<dbReference type="EnsemblFungi" id="SPBC1683.03c.1">
    <property type="protein sequence ID" value="SPBC1683.03c.1:pep"/>
    <property type="gene ID" value="SPBC1683.03c"/>
</dbReference>
<dbReference type="KEGG" id="spo:2540164"/>
<dbReference type="PomBase" id="SPBC1683.03c"/>
<dbReference type="VEuPathDB" id="FungiDB:SPBC1683.03c"/>
<dbReference type="eggNOG" id="KOG0254">
    <property type="taxonomic scope" value="Eukaryota"/>
</dbReference>
<dbReference type="HOGENOM" id="CLU_000960_27_4_1"/>
<dbReference type="InParanoid" id="Q9P6J7"/>
<dbReference type="OMA" id="LCMSIAP"/>
<dbReference type="PhylomeDB" id="Q9P6J7"/>
<dbReference type="PRO" id="PR:Q9P6J7"/>
<dbReference type="Proteomes" id="UP000002485">
    <property type="component" value="Chromosome II"/>
</dbReference>
<dbReference type="GO" id="GO:0005783">
    <property type="term" value="C:endoplasmic reticulum"/>
    <property type="evidence" value="ECO:0007669"/>
    <property type="project" value="UniProtKB-SubCell"/>
</dbReference>
<dbReference type="GO" id="GO:0016020">
    <property type="term" value="C:membrane"/>
    <property type="evidence" value="ECO:0000318"/>
    <property type="project" value="GO_Central"/>
</dbReference>
<dbReference type="GO" id="GO:0005886">
    <property type="term" value="C:plasma membrane"/>
    <property type="evidence" value="ECO:0000266"/>
    <property type="project" value="PomBase"/>
</dbReference>
<dbReference type="GO" id="GO:0008519">
    <property type="term" value="F:ammonium channel activity"/>
    <property type="evidence" value="ECO:0000266"/>
    <property type="project" value="PomBase"/>
</dbReference>
<dbReference type="GO" id="GO:0072488">
    <property type="term" value="P:ammonium transmembrane transport"/>
    <property type="evidence" value="ECO:0000266"/>
    <property type="project" value="PomBase"/>
</dbReference>
<dbReference type="CDD" id="cd17476">
    <property type="entry name" value="MFS_Amf1_MDR_like"/>
    <property type="match status" value="1"/>
</dbReference>
<dbReference type="FunFam" id="1.20.1250.20:FF:000285">
    <property type="entry name" value="MFS general substrate transporter"/>
    <property type="match status" value="1"/>
</dbReference>
<dbReference type="FunFam" id="1.20.1250.20:FF:000294">
    <property type="entry name" value="MFS transporter of unkown specificity"/>
    <property type="match status" value="1"/>
</dbReference>
<dbReference type="Gene3D" id="1.20.1250.20">
    <property type="entry name" value="MFS general substrate transporter like domains"/>
    <property type="match status" value="2"/>
</dbReference>
<dbReference type="InterPro" id="IPR011701">
    <property type="entry name" value="MFS"/>
</dbReference>
<dbReference type="InterPro" id="IPR020846">
    <property type="entry name" value="MFS_dom"/>
</dbReference>
<dbReference type="InterPro" id="IPR036259">
    <property type="entry name" value="MFS_trans_sf"/>
</dbReference>
<dbReference type="PANTHER" id="PTHR42718:SF1">
    <property type="entry name" value="LOW AFFINITY AMMONIUM TRANSPORTER"/>
    <property type="match status" value="1"/>
</dbReference>
<dbReference type="PANTHER" id="PTHR42718">
    <property type="entry name" value="MAJOR FACILITATOR SUPERFAMILY MULTIDRUG TRANSPORTER MFSC"/>
    <property type="match status" value="1"/>
</dbReference>
<dbReference type="Pfam" id="PF07690">
    <property type="entry name" value="MFS_1"/>
    <property type="match status" value="1"/>
</dbReference>
<dbReference type="SUPFAM" id="SSF103473">
    <property type="entry name" value="MFS general substrate transporter"/>
    <property type="match status" value="1"/>
</dbReference>
<dbReference type="PROSITE" id="PS50850">
    <property type="entry name" value="MFS"/>
    <property type="match status" value="1"/>
</dbReference>
<gene>
    <name type="ORF">SPBC1683.03c</name>
</gene>
<sequence length="519" mass="56954">MMNYVKSLGTYNTRNMEKESSKDLVQNEDTPLPVQKISMSLFHEIVFVFIACTAQLMTQAGLGQSIAPNNIIGKSLGTTNPGQLSWFPASYSLTVGTFILIAGRLGDIYGHKKMFVLGYIWFCIWSLISGFSYYAKSVIMFDVCRALTGIAPAFLLPNALALLGRVYPPGKKKNLIFALFGATAPNGFLLGSVFSGIFAQLSWWPWTYWTTAIVCIVFAIIGYFAIPHIEADEVEEKQKFDYLGAFFGVSGLVLINFSWNQGPVVGWQVPYVYILLIIGFLSLVVFVLVEKRVVQPILAPSMMNSEMGCVLICVAAGWACFGIWMYYLWQFLENLRFATPLLVTAQLTPVGISGCAAALTTGYLLKRLKPTKIMVVSMIAFTVGTILIATAPIHQTYWAQTFVSIIVTPWGMDMSFPAATLMLSDFVPKQHQGIAASLVSTVVNYSISIGLGIAGTVETHLNHKGVDLIRGYRSAWYMGTGFGGLGVCVAILTVFASYLKVGQQKSPKFPLIMKNTKAV</sequence>
<name>YHD3_SCHPO</name>
<reference evidence="4" key="1">
    <citation type="journal article" date="2002" name="Nature">
        <title>The genome sequence of Schizosaccharomyces pombe.</title>
        <authorList>
            <person name="Wood V."/>
            <person name="Gwilliam R."/>
            <person name="Rajandream M.A."/>
            <person name="Lyne M.H."/>
            <person name="Lyne R."/>
            <person name="Stewart A."/>
            <person name="Sgouros J.G."/>
            <person name="Peat N."/>
            <person name="Hayles J."/>
            <person name="Baker S.G."/>
            <person name="Basham D."/>
            <person name="Bowman S."/>
            <person name="Brooks K."/>
            <person name="Brown D."/>
            <person name="Brown S."/>
            <person name="Chillingworth T."/>
            <person name="Churcher C.M."/>
            <person name="Collins M."/>
            <person name="Connor R."/>
            <person name="Cronin A."/>
            <person name="Davis P."/>
            <person name="Feltwell T."/>
            <person name="Fraser A."/>
            <person name="Gentles S."/>
            <person name="Goble A."/>
            <person name="Hamlin N."/>
            <person name="Harris D.E."/>
            <person name="Hidalgo J."/>
            <person name="Hodgson G."/>
            <person name="Holroyd S."/>
            <person name="Hornsby T."/>
            <person name="Howarth S."/>
            <person name="Huckle E.J."/>
            <person name="Hunt S."/>
            <person name="Jagels K."/>
            <person name="James K.D."/>
            <person name="Jones L."/>
            <person name="Jones M."/>
            <person name="Leather S."/>
            <person name="McDonald S."/>
            <person name="McLean J."/>
            <person name="Mooney P."/>
            <person name="Moule S."/>
            <person name="Mungall K.L."/>
            <person name="Murphy L.D."/>
            <person name="Niblett D."/>
            <person name="Odell C."/>
            <person name="Oliver K."/>
            <person name="O'Neil S."/>
            <person name="Pearson D."/>
            <person name="Quail M.A."/>
            <person name="Rabbinowitsch E."/>
            <person name="Rutherford K.M."/>
            <person name="Rutter S."/>
            <person name="Saunders D."/>
            <person name="Seeger K."/>
            <person name="Sharp S."/>
            <person name="Skelton J."/>
            <person name="Simmonds M.N."/>
            <person name="Squares R."/>
            <person name="Squares S."/>
            <person name="Stevens K."/>
            <person name="Taylor K."/>
            <person name="Taylor R.G."/>
            <person name="Tivey A."/>
            <person name="Walsh S.V."/>
            <person name="Warren T."/>
            <person name="Whitehead S."/>
            <person name="Woodward J.R."/>
            <person name="Volckaert G."/>
            <person name="Aert R."/>
            <person name="Robben J."/>
            <person name="Grymonprez B."/>
            <person name="Weltjens I."/>
            <person name="Vanstreels E."/>
            <person name="Rieger M."/>
            <person name="Schaefer M."/>
            <person name="Mueller-Auer S."/>
            <person name="Gabel C."/>
            <person name="Fuchs M."/>
            <person name="Duesterhoeft A."/>
            <person name="Fritzc C."/>
            <person name="Holzer E."/>
            <person name="Moestl D."/>
            <person name="Hilbert H."/>
            <person name="Borzym K."/>
            <person name="Langer I."/>
            <person name="Beck A."/>
            <person name="Lehrach H."/>
            <person name="Reinhardt R."/>
            <person name="Pohl T.M."/>
            <person name="Eger P."/>
            <person name="Zimmermann W."/>
            <person name="Wedler H."/>
            <person name="Wambutt R."/>
            <person name="Purnelle B."/>
            <person name="Goffeau A."/>
            <person name="Cadieu E."/>
            <person name="Dreano S."/>
            <person name="Gloux S."/>
            <person name="Lelaure V."/>
            <person name="Mottier S."/>
            <person name="Galibert F."/>
            <person name="Aves S.J."/>
            <person name="Xiang Z."/>
            <person name="Hunt C."/>
            <person name="Moore K."/>
            <person name="Hurst S.M."/>
            <person name="Lucas M."/>
            <person name="Rochet M."/>
            <person name="Gaillardin C."/>
            <person name="Tallada V.A."/>
            <person name="Garzon A."/>
            <person name="Thode G."/>
            <person name="Daga R.R."/>
            <person name="Cruzado L."/>
            <person name="Jimenez J."/>
            <person name="Sanchez M."/>
            <person name="del Rey F."/>
            <person name="Benito J."/>
            <person name="Dominguez A."/>
            <person name="Revuelta J.L."/>
            <person name="Moreno S."/>
            <person name="Armstrong J."/>
            <person name="Forsburg S.L."/>
            <person name="Cerutti L."/>
            <person name="Lowe T."/>
            <person name="McCombie W.R."/>
            <person name="Paulsen I."/>
            <person name="Potashkin J."/>
            <person name="Shpakovski G.V."/>
            <person name="Ussery D."/>
            <person name="Barrell B.G."/>
            <person name="Nurse P."/>
        </authorList>
    </citation>
    <scope>NUCLEOTIDE SEQUENCE [LARGE SCALE GENOMIC DNA]</scope>
    <source>
        <strain>972 / ATCC 24843</strain>
    </source>
</reference>
<reference evidence="3" key="2">
    <citation type="journal article" date="2006" name="Nat. Biotechnol.">
        <title>ORFeome cloning and global analysis of protein localization in the fission yeast Schizosaccharomyces pombe.</title>
        <authorList>
            <person name="Matsuyama A."/>
            <person name="Arai R."/>
            <person name="Yashiroda Y."/>
            <person name="Shirai A."/>
            <person name="Kamata A."/>
            <person name="Sekido S."/>
            <person name="Kobayashi Y."/>
            <person name="Hashimoto A."/>
            <person name="Hamamoto M."/>
            <person name="Hiraoka Y."/>
            <person name="Horinouchi S."/>
            <person name="Yoshida M."/>
        </authorList>
    </citation>
    <scope>SUBCELLULAR LOCATION [LARGE SCALE ANALYSIS]</scope>
</reference>
<proteinExistence type="inferred from homology"/>
<feature type="chain" id="PRO_0000372712" description="Uncharacterized MFS-type transporter C1683.03c">
    <location>
        <begin position="1"/>
        <end position="519"/>
    </location>
</feature>
<feature type="transmembrane region" description="Helical" evidence="1">
    <location>
        <begin position="37"/>
        <end position="57"/>
    </location>
</feature>
<feature type="transmembrane region" description="Helical" evidence="1">
    <location>
        <begin position="82"/>
        <end position="102"/>
    </location>
</feature>
<feature type="transmembrane region" description="Helical" evidence="1">
    <location>
        <begin position="114"/>
        <end position="134"/>
    </location>
</feature>
<feature type="transmembrane region" description="Helical" evidence="1">
    <location>
        <begin position="146"/>
        <end position="166"/>
    </location>
</feature>
<feature type="transmembrane region" description="Helical" evidence="1">
    <location>
        <begin position="175"/>
        <end position="195"/>
    </location>
</feature>
<feature type="transmembrane region" description="Helical" evidence="1">
    <location>
        <begin position="209"/>
        <end position="229"/>
    </location>
</feature>
<feature type="transmembrane region" description="Helical" evidence="1">
    <location>
        <begin position="240"/>
        <end position="260"/>
    </location>
</feature>
<feature type="transmembrane region" description="Helical" evidence="1">
    <location>
        <begin position="269"/>
        <end position="289"/>
    </location>
</feature>
<feature type="transmembrane region" description="Helical" evidence="1">
    <location>
        <begin position="309"/>
        <end position="329"/>
    </location>
</feature>
<feature type="transmembrane region" description="Helical" evidence="1">
    <location>
        <begin position="337"/>
        <end position="357"/>
    </location>
</feature>
<feature type="transmembrane region" description="Helical" evidence="1">
    <location>
        <begin position="373"/>
        <end position="393"/>
    </location>
</feature>
<feature type="transmembrane region" description="Helical" evidence="1">
    <location>
        <begin position="402"/>
        <end position="422"/>
    </location>
</feature>
<feature type="transmembrane region" description="Helical" evidence="1">
    <location>
        <begin position="434"/>
        <end position="454"/>
    </location>
</feature>
<feature type="transmembrane region" description="Helical" evidence="1">
    <location>
        <begin position="475"/>
        <end position="495"/>
    </location>
</feature>
<comment type="subcellular location">
    <subcellularLocation>
        <location evidence="2">Endoplasmic reticulum</location>
    </subcellularLocation>
    <subcellularLocation>
        <location evidence="1">Membrane</location>
        <topology evidence="1">Multi-pass membrane protein</topology>
    </subcellularLocation>
</comment>
<comment type="similarity">
    <text evidence="1">Belongs to the major facilitator superfamily.</text>
</comment>